<sequence length="507" mass="58325">MKNTYYITTPIYYVNDVSHIGHAYTSVASDVIARFMRCCGKDVMFLTGTDEHGQKVEKAAINKNIDPQSFTDKTSQNFRDLMVAMNISNDDFIRTTENRHKKAVAVFWQKLLDNGAIYEGFYEGWYSVRDEAFYDESEITEDKLAPTGAPVEWVKEPSYFFNLAKWQDKLLEFYELNPDFVRPISRRNEVISFVKSGLKDLSISRTTFNWGIKVPNNEKHVIYVWLDALVNYISALGYPDQQSNYSKFWPANLQVVGKDILRFHAVYWPAFLMAAEISPPKSIMVHGWWTNAGQKISKSLGNTIDPITLIDEFGVDQVRYFLMREVIFGADANFTRNNLITRINSELSNKIGNLLHRIVSFVYNNNDAKVPLIKSGVIDKIYELPILKTAMKFAQENILLMDKIEINKILENIINLAEDANIYIANEAPWNLKKTDYDKMLEVLYTLLEVLRYVAIMLQPFVPSSANKMLDQLGVAKEERLFKHLVRDHALKAGSNILEPSIIFPKI</sequence>
<accession>Q68W54</accession>
<protein>
    <recommendedName>
        <fullName evidence="1">Methionine--tRNA ligase</fullName>
        <ecNumber evidence="1">6.1.1.10</ecNumber>
    </recommendedName>
    <alternativeName>
        <fullName evidence="1">Methionyl-tRNA synthetase</fullName>
        <shortName evidence="1">MetRS</shortName>
    </alternativeName>
</protein>
<proteinExistence type="inferred from homology"/>
<feature type="chain" id="PRO_0000272403" description="Methionine--tRNA ligase">
    <location>
        <begin position="1"/>
        <end position="507"/>
    </location>
</feature>
<feature type="short sequence motif" description="'HIGH' region">
    <location>
        <begin position="12"/>
        <end position="22"/>
    </location>
</feature>
<feature type="short sequence motif" description="'KMSKS' region">
    <location>
        <begin position="295"/>
        <end position="299"/>
    </location>
</feature>
<feature type="binding site" evidence="1">
    <location>
        <position position="298"/>
    </location>
    <ligand>
        <name>ATP</name>
        <dbReference type="ChEBI" id="CHEBI:30616"/>
    </ligand>
</feature>
<dbReference type="EC" id="6.1.1.10" evidence="1"/>
<dbReference type="EMBL" id="AE017197">
    <property type="protein sequence ID" value="AAU04138.1"/>
    <property type="molecule type" value="Genomic_DNA"/>
</dbReference>
<dbReference type="RefSeq" id="WP_011191115.1">
    <property type="nucleotide sequence ID" value="NC_006142.1"/>
</dbReference>
<dbReference type="SMR" id="Q68W54"/>
<dbReference type="KEGG" id="rty:RT0678"/>
<dbReference type="eggNOG" id="COG0143">
    <property type="taxonomic scope" value="Bacteria"/>
</dbReference>
<dbReference type="HOGENOM" id="CLU_009710_9_4_5"/>
<dbReference type="OrthoDB" id="9810191at2"/>
<dbReference type="Proteomes" id="UP000000604">
    <property type="component" value="Chromosome"/>
</dbReference>
<dbReference type="GO" id="GO:0005737">
    <property type="term" value="C:cytoplasm"/>
    <property type="evidence" value="ECO:0007669"/>
    <property type="project" value="UniProtKB-SubCell"/>
</dbReference>
<dbReference type="GO" id="GO:0005524">
    <property type="term" value="F:ATP binding"/>
    <property type="evidence" value="ECO:0007669"/>
    <property type="project" value="UniProtKB-UniRule"/>
</dbReference>
<dbReference type="GO" id="GO:0004825">
    <property type="term" value="F:methionine-tRNA ligase activity"/>
    <property type="evidence" value="ECO:0007669"/>
    <property type="project" value="UniProtKB-UniRule"/>
</dbReference>
<dbReference type="GO" id="GO:0006431">
    <property type="term" value="P:methionyl-tRNA aminoacylation"/>
    <property type="evidence" value="ECO:0007669"/>
    <property type="project" value="UniProtKB-UniRule"/>
</dbReference>
<dbReference type="CDD" id="cd07957">
    <property type="entry name" value="Anticodon_Ia_Met"/>
    <property type="match status" value="1"/>
</dbReference>
<dbReference type="CDD" id="cd00814">
    <property type="entry name" value="MetRS_core"/>
    <property type="match status" value="1"/>
</dbReference>
<dbReference type="FunFam" id="2.170.220.10:FF:000001">
    <property type="entry name" value="methionine--tRNA ligase, mitochondrial"/>
    <property type="match status" value="1"/>
</dbReference>
<dbReference type="Gene3D" id="2.170.220.10">
    <property type="match status" value="1"/>
</dbReference>
<dbReference type="Gene3D" id="3.40.50.620">
    <property type="entry name" value="HUPs"/>
    <property type="match status" value="1"/>
</dbReference>
<dbReference type="Gene3D" id="1.10.730.10">
    <property type="entry name" value="Isoleucyl-tRNA Synthetase, Domain 1"/>
    <property type="match status" value="1"/>
</dbReference>
<dbReference type="HAMAP" id="MF_01228">
    <property type="entry name" value="Met_tRNA_synth_type2"/>
    <property type="match status" value="1"/>
</dbReference>
<dbReference type="InterPro" id="IPR041872">
    <property type="entry name" value="Anticodon_Met"/>
</dbReference>
<dbReference type="InterPro" id="IPR014758">
    <property type="entry name" value="Met-tRNA_synth"/>
</dbReference>
<dbReference type="InterPro" id="IPR023457">
    <property type="entry name" value="Met-tRNA_synth_2"/>
</dbReference>
<dbReference type="InterPro" id="IPR015413">
    <property type="entry name" value="Methionyl/Leucyl_tRNA_Synth"/>
</dbReference>
<dbReference type="InterPro" id="IPR033911">
    <property type="entry name" value="MetRS_core"/>
</dbReference>
<dbReference type="InterPro" id="IPR014729">
    <property type="entry name" value="Rossmann-like_a/b/a_fold"/>
</dbReference>
<dbReference type="InterPro" id="IPR009080">
    <property type="entry name" value="tRNAsynth_Ia_anticodon-bd"/>
</dbReference>
<dbReference type="NCBIfam" id="TIGR00398">
    <property type="entry name" value="metG"/>
    <property type="match status" value="1"/>
</dbReference>
<dbReference type="NCBIfam" id="NF008900">
    <property type="entry name" value="PRK12267.1"/>
    <property type="match status" value="1"/>
</dbReference>
<dbReference type="PANTHER" id="PTHR43326:SF1">
    <property type="entry name" value="METHIONINE--TRNA LIGASE, MITOCHONDRIAL"/>
    <property type="match status" value="1"/>
</dbReference>
<dbReference type="PANTHER" id="PTHR43326">
    <property type="entry name" value="METHIONYL-TRNA SYNTHETASE"/>
    <property type="match status" value="1"/>
</dbReference>
<dbReference type="Pfam" id="PF19303">
    <property type="entry name" value="Anticodon_3"/>
    <property type="match status" value="1"/>
</dbReference>
<dbReference type="Pfam" id="PF09334">
    <property type="entry name" value="tRNA-synt_1g"/>
    <property type="match status" value="2"/>
</dbReference>
<dbReference type="PRINTS" id="PR01041">
    <property type="entry name" value="TRNASYNTHMET"/>
</dbReference>
<dbReference type="SUPFAM" id="SSF47323">
    <property type="entry name" value="Anticodon-binding domain of a subclass of class I aminoacyl-tRNA synthetases"/>
    <property type="match status" value="1"/>
</dbReference>
<dbReference type="SUPFAM" id="SSF52374">
    <property type="entry name" value="Nucleotidylyl transferase"/>
    <property type="match status" value="1"/>
</dbReference>
<name>SYM_RICTY</name>
<organism>
    <name type="scientific">Rickettsia typhi (strain ATCC VR-144 / Wilmington)</name>
    <dbReference type="NCBI Taxonomy" id="257363"/>
    <lineage>
        <taxon>Bacteria</taxon>
        <taxon>Pseudomonadati</taxon>
        <taxon>Pseudomonadota</taxon>
        <taxon>Alphaproteobacteria</taxon>
        <taxon>Rickettsiales</taxon>
        <taxon>Rickettsiaceae</taxon>
        <taxon>Rickettsieae</taxon>
        <taxon>Rickettsia</taxon>
        <taxon>typhus group</taxon>
    </lineage>
</organism>
<reference key="1">
    <citation type="journal article" date="2004" name="J. Bacteriol.">
        <title>Complete genome sequence of Rickettsia typhi and comparison with sequences of other Rickettsiae.</title>
        <authorList>
            <person name="McLeod M.P."/>
            <person name="Qin X."/>
            <person name="Karpathy S.E."/>
            <person name="Gioia J."/>
            <person name="Highlander S.K."/>
            <person name="Fox G.E."/>
            <person name="McNeill T.Z."/>
            <person name="Jiang H."/>
            <person name="Muzny D."/>
            <person name="Jacob L.S."/>
            <person name="Hawes A.C."/>
            <person name="Sodergren E."/>
            <person name="Gill R."/>
            <person name="Hume J."/>
            <person name="Morgan M."/>
            <person name="Fan G."/>
            <person name="Amin A.G."/>
            <person name="Gibbs R.A."/>
            <person name="Hong C."/>
            <person name="Yu X.-J."/>
            <person name="Walker D.H."/>
            <person name="Weinstock G.M."/>
        </authorList>
    </citation>
    <scope>NUCLEOTIDE SEQUENCE [LARGE SCALE GENOMIC DNA]</scope>
    <source>
        <strain>ATCC VR-144 / Wilmington</strain>
    </source>
</reference>
<comment type="function">
    <text evidence="1">Is required not only for elongation of protein synthesis but also for the initiation of all mRNA translation through initiator tRNA(fMet) aminoacylation.</text>
</comment>
<comment type="catalytic activity">
    <reaction evidence="1">
        <text>tRNA(Met) + L-methionine + ATP = L-methionyl-tRNA(Met) + AMP + diphosphate</text>
        <dbReference type="Rhea" id="RHEA:13481"/>
        <dbReference type="Rhea" id="RHEA-COMP:9667"/>
        <dbReference type="Rhea" id="RHEA-COMP:9698"/>
        <dbReference type="ChEBI" id="CHEBI:30616"/>
        <dbReference type="ChEBI" id="CHEBI:33019"/>
        <dbReference type="ChEBI" id="CHEBI:57844"/>
        <dbReference type="ChEBI" id="CHEBI:78442"/>
        <dbReference type="ChEBI" id="CHEBI:78530"/>
        <dbReference type="ChEBI" id="CHEBI:456215"/>
        <dbReference type="EC" id="6.1.1.10"/>
    </reaction>
</comment>
<comment type="subunit">
    <text evidence="1">Monomer.</text>
</comment>
<comment type="subcellular location">
    <subcellularLocation>
        <location evidence="1">Cytoplasm</location>
    </subcellularLocation>
</comment>
<comment type="similarity">
    <text evidence="1">Belongs to the class-I aminoacyl-tRNA synthetase family. MetG type 2B subfamily.</text>
</comment>
<gene>
    <name evidence="1" type="primary">metG</name>
    <name type="ordered locus">RT0678</name>
</gene>
<keyword id="KW-0030">Aminoacyl-tRNA synthetase</keyword>
<keyword id="KW-0067">ATP-binding</keyword>
<keyword id="KW-0963">Cytoplasm</keyword>
<keyword id="KW-0436">Ligase</keyword>
<keyword id="KW-0547">Nucleotide-binding</keyword>
<keyword id="KW-0648">Protein biosynthesis</keyword>
<evidence type="ECO:0000255" key="1">
    <source>
        <dbReference type="HAMAP-Rule" id="MF_01228"/>
    </source>
</evidence>